<organism>
    <name type="scientific">Xanthomonas oryzae pv. oryzae (strain KACC10331 / KXO85)</name>
    <dbReference type="NCBI Taxonomy" id="291331"/>
    <lineage>
        <taxon>Bacteria</taxon>
        <taxon>Pseudomonadati</taxon>
        <taxon>Pseudomonadota</taxon>
        <taxon>Gammaproteobacteria</taxon>
        <taxon>Lysobacterales</taxon>
        <taxon>Lysobacteraceae</taxon>
        <taxon>Xanthomonas</taxon>
    </lineage>
</organism>
<reference key="1">
    <citation type="journal article" date="2005" name="Nucleic Acids Res.">
        <title>The genome sequence of Xanthomonas oryzae pathovar oryzae KACC10331, the bacterial blight pathogen of rice.</title>
        <authorList>
            <person name="Lee B.-M."/>
            <person name="Park Y.-J."/>
            <person name="Park D.-S."/>
            <person name="Kang H.-W."/>
            <person name="Kim J.-G."/>
            <person name="Song E.-S."/>
            <person name="Park I.-C."/>
            <person name="Yoon U.-H."/>
            <person name="Hahn J.-H."/>
            <person name="Koo B.-S."/>
            <person name="Lee G.-B."/>
            <person name="Kim H."/>
            <person name="Park H.-S."/>
            <person name="Yoon K.-O."/>
            <person name="Kim J.-H."/>
            <person name="Jung C.-H."/>
            <person name="Koh N.-H."/>
            <person name="Seo J.-S."/>
            <person name="Go S.-J."/>
        </authorList>
    </citation>
    <scope>NUCLEOTIDE SEQUENCE [LARGE SCALE GENOMIC DNA]</scope>
    <source>
        <strain>KACC10331 / KXO85</strain>
    </source>
</reference>
<keyword id="KW-0227">DNA damage</keyword>
<keyword id="KW-0234">DNA repair</keyword>
<keyword id="KW-1185">Reference proteome</keyword>
<sequence length="625" mass="67935">MAIRQLPEMLINQIAAGEVVERPASVVKELVENALDAGATRVDIELEEGGVRLIRIRDNGGGIAPDELPLAVSRHATSKIASLDDLETVATLGFRGEALPSIASVSRFTLTSRRHDAEHGSALEIDGGRLGEVVPRAHAPGTTVEVRELFFNVPARRKFLRAERTELGHIEEWLRSLALARPDVELRVSHNGKPSRRYKPGDLYSDARLGETLGEDFARQALRVDHSGAGLRLHGWVAQPHYSRASTDQQYLYVNGRSVRDRSVAHAVKMAYGDVLFHGRQPAYVLFLELDPARVDVNVHPAKHEVRFREARLIHDFVYRTLQDALAHTRAGATPNSIGSDGAGYTGATAGEMGNIASGGPANHGNAPGRSGSAYSYANWTPSQTPLGLRVDEARAAYSALYAPPPRNAPQSTGMPSMAGTGLPATSEDSGVPPLGYAIAQLHGIYILAENAEGLIVVDMHAAHERIVYERLKNAHDSIGLHAQPLLVPMTLAVGEREADTAEREADTLATLGFEITRAGPQSLHVRSIPALLANAEPEALLRDVLGDLREHGQSCRIASARDELLSTMACHGAVRANRRLTVPEMNALLRDMEATERSGQCNHGRPTWARFTLSDIDRWFLRGR</sequence>
<evidence type="ECO:0000255" key="1">
    <source>
        <dbReference type="HAMAP-Rule" id="MF_00149"/>
    </source>
</evidence>
<evidence type="ECO:0000256" key="2">
    <source>
        <dbReference type="SAM" id="MobiDB-lite"/>
    </source>
</evidence>
<accession>Q5GZ85</accession>
<name>MUTL_XANOR</name>
<protein>
    <recommendedName>
        <fullName evidence="1">DNA mismatch repair protein MutL</fullName>
    </recommendedName>
</protein>
<proteinExistence type="inferred from homology"/>
<comment type="function">
    <text evidence="1">This protein is involved in the repair of mismatches in DNA. It is required for dam-dependent methyl-directed DNA mismatch repair. May act as a 'molecular matchmaker', a protein that promotes the formation of a stable complex between two or more DNA-binding proteins in an ATP-dependent manner without itself being part of a final effector complex.</text>
</comment>
<comment type="similarity">
    <text evidence="1">Belongs to the DNA mismatch repair MutL/HexB family.</text>
</comment>
<feature type="chain" id="PRO_1000010104" description="DNA mismatch repair protein MutL">
    <location>
        <begin position="1"/>
        <end position="625"/>
    </location>
</feature>
<feature type="region of interest" description="Disordered" evidence="2">
    <location>
        <begin position="404"/>
        <end position="427"/>
    </location>
</feature>
<dbReference type="EMBL" id="AE013598">
    <property type="protein sequence ID" value="AAW75986.1"/>
    <property type="molecule type" value="Genomic_DNA"/>
</dbReference>
<dbReference type="SMR" id="Q5GZ85"/>
<dbReference type="STRING" id="291331.XOO2732"/>
<dbReference type="KEGG" id="xoo:XOO2732"/>
<dbReference type="HOGENOM" id="CLU_004131_4_2_6"/>
<dbReference type="Proteomes" id="UP000006735">
    <property type="component" value="Chromosome"/>
</dbReference>
<dbReference type="GO" id="GO:0032300">
    <property type="term" value="C:mismatch repair complex"/>
    <property type="evidence" value="ECO:0007669"/>
    <property type="project" value="InterPro"/>
</dbReference>
<dbReference type="GO" id="GO:0005524">
    <property type="term" value="F:ATP binding"/>
    <property type="evidence" value="ECO:0007669"/>
    <property type="project" value="InterPro"/>
</dbReference>
<dbReference type="GO" id="GO:0016887">
    <property type="term" value="F:ATP hydrolysis activity"/>
    <property type="evidence" value="ECO:0007669"/>
    <property type="project" value="InterPro"/>
</dbReference>
<dbReference type="GO" id="GO:0140664">
    <property type="term" value="F:ATP-dependent DNA damage sensor activity"/>
    <property type="evidence" value="ECO:0007669"/>
    <property type="project" value="InterPro"/>
</dbReference>
<dbReference type="GO" id="GO:0030983">
    <property type="term" value="F:mismatched DNA binding"/>
    <property type="evidence" value="ECO:0007669"/>
    <property type="project" value="InterPro"/>
</dbReference>
<dbReference type="GO" id="GO:0006298">
    <property type="term" value="P:mismatch repair"/>
    <property type="evidence" value="ECO:0007669"/>
    <property type="project" value="UniProtKB-UniRule"/>
</dbReference>
<dbReference type="CDD" id="cd16926">
    <property type="entry name" value="HATPase_MutL-MLH-PMS-like"/>
    <property type="match status" value="1"/>
</dbReference>
<dbReference type="CDD" id="cd03482">
    <property type="entry name" value="MutL_Trans_MutL"/>
    <property type="match status" value="1"/>
</dbReference>
<dbReference type="FunFam" id="3.30.230.10:FF:000013">
    <property type="entry name" value="DNA mismatch repair endonuclease MutL"/>
    <property type="match status" value="1"/>
</dbReference>
<dbReference type="FunFam" id="3.30.565.10:FF:000003">
    <property type="entry name" value="DNA mismatch repair endonuclease MutL"/>
    <property type="match status" value="1"/>
</dbReference>
<dbReference type="FunFam" id="3.30.1370.100:FF:000005">
    <property type="entry name" value="DNA mismatch repair protein MutL"/>
    <property type="match status" value="1"/>
</dbReference>
<dbReference type="Gene3D" id="3.30.230.10">
    <property type="match status" value="1"/>
</dbReference>
<dbReference type="Gene3D" id="3.30.565.10">
    <property type="entry name" value="Histidine kinase-like ATPase, C-terminal domain"/>
    <property type="match status" value="1"/>
</dbReference>
<dbReference type="Gene3D" id="3.30.1540.20">
    <property type="entry name" value="MutL, C-terminal domain, dimerisation subdomain"/>
    <property type="match status" value="1"/>
</dbReference>
<dbReference type="Gene3D" id="3.30.1370.100">
    <property type="entry name" value="MutL, C-terminal domain, regulatory subdomain"/>
    <property type="match status" value="1"/>
</dbReference>
<dbReference type="HAMAP" id="MF_00149">
    <property type="entry name" value="DNA_mis_repair"/>
    <property type="match status" value="1"/>
</dbReference>
<dbReference type="InterPro" id="IPR014762">
    <property type="entry name" value="DNA_mismatch_repair_CS"/>
</dbReference>
<dbReference type="InterPro" id="IPR020667">
    <property type="entry name" value="DNA_mismatch_repair_MutL"/>
</dbReference>
<dbReference type="InterPro" id="IPR013507">
    <property type="entry name" value="DNA_mismatch_S5_2-like"/>
</dbReference>
<dbReference type="InterPro" id="IPR036890">
    <property type="entry name" value="HATPase_C_sf"/>
</dbReference>
<dbReference type="InterPro" id="IPR002099">
    <property type="entry name" value="MutL/Mlh/PMS"/>
</dbReference>
<dbReference type="InterPro" id="IPR038973">
    <property type="entry name" value="MutL/Mlh/Pms-like"/>
</dbReference>
<dbReference type="InterPro" id="IPR014790">
    <property type="entry name" value="MutL_C"/>
</dbReference>
<dbReference type="InterPro" id="IPR042120">
    <property type="entry name" value="MutL_C_dimsub"/>
</dbReference>
<dbReference type="InterPro" id="IPR042121">
    <property type="entry name" value="MutL_C_regsub"/>
</dbReference>
<dbReference type="InterPro" id="IPR037198">
    <property type="entry name" value="MutL_C_sf"/>
</dbReference>
<dbReference type="InterPro" id="IPR020568">
    <property type="entry name" value="Ribosomal_Su5_D2-typ_SF"/>
</dbReference>
<dbReference type="InterPro" id="IPR014721">
    <property type="entry name" value="Ribsml_uS5_D2-typ_fold_subgr"/>
</dbReference>
<dbReference type="NCBIfam" id="TIGR00585">
    <property type="entry name" value="mutl"/>
    <property type="match status" value="1"/>
</dbReference>
<dbReference type="NCBIfam" id="NF000949">
    <property type="entry name" value="PRK00095.1-2"/>
    <property type="match status" value="1"/>
</dbReference>
<dbReference type="PANTHER" id="PTHR10073">
    <property type="entry name" value="DNA MISMATCH REPAIR PROTEIN MLH, PMS, MUTL"/>
    <property type="match status" value="1"/>
</dbReference>
<dbReference type="PANTHER" id="PTHR10073:SF12">
    <property type="entry name" value="DNA MISMATCH REPAIR PROTEIN MLH1"/>
    <property type="match status" value="1"/>
</dbReference>
<dbReference type="Pfam" id="PF01119">
    <property type="entry name" value="DNA_mis_repair"/>
    <property type="match status" value="1"/>
</dbReference>
<dbReference type="Pfam" id="PF13589">
    <property type="entry name" value="HATPase_c_3"/>
    <property type="match status" value="1"/>
</dbReference>
<dbReference type="Pfam" id="PF08676">
    <property type="entry name" value="MutL_C"/>
    <property type="match status" value="1"/>
</dbReference>
<dbReference type="SMART" id="SM01340">
    <property type="entry name" value="DNA_mis_repair"/>
    <property type="match status" value="1"/>
</dbReference>
<dbReference type="SMART" id="SM00853">
    <property type="entry name" value="MutL_C"/>
    <property type="match status" value="1"/>
</dbReference>
<dbReference type="SUPFAM" id="SSF55874">
    <property type="entry name" value="ATPase domain of HSP90 chaperone/DNA topoisomerase II/histidine kinase"/>
    <property type="match status" value="1"/>
</dbReference>
<dbReference type="SUPFAM" id="SSF118116">
    <property type="entry name" value="DNA mismatch repair protein MutL"/>
    <property type="match status" value="1"/>
</dbReference>
<dbReference type="SUPFAM" id="SSF54211">
    <property type="entry name" value="Ribosomal protein S5 domain 2-like"/>
    <property type="match status" value="1"/>
</dbReference>
<dbReference type="PROSITE" id="PS00058">
    <property type="entry name" value="DNA_MISMATCH_REPAIR_1"/>
    <property type="match status" value="1"/>
</dbReference>
<gene>
    <name evidence="1" type="primary">mutL</name>
    <name type="ordered locus">XOO2732</name>
</gene>